<dbReference type="EC" id="2.7.1.25" evidence="1"/>
<dbReference type="EMBL" id="CP001098">
    <property type="protein sequence ID" value="ACL71010.1"/>
    <property type="molecule type" value="Genomic_DNA"/>
</dbReference>
<dbReference type="RefSeq" id="WP_015923979.1">
    <property type="nucleotide sequence ID" value="NC_011899.1"/>
</dbReference>
<dbReference type="SMR" id="B8D0S4"/>
<dbReference type="STRING" id="373903.Hore_22650"/>
<dbReference type="KEGG" id="hor:Hore_22650"/>
<dbReference type="eggNOG" id="COG0529">
    <property type="taxonomic scope" value="Bacteria"/>
</dbReference>
<dbReference type="HOGENOM" id="CLU_046932_2_1_9"/>
<dbReference type="OrthoDB" id="9804504at2"/>
<dbReference type="UniPathway" id="UPA00140">
    <property type="reaction ID" value="UER00205"/>
</dbReference>
<dbReference type="Proteomes" id="UP000000719">
    <property type="component" value="Chromosome"/>
</dbReference>
<dbReference type="GO" id="GO:0005737">
    <property type="term" value="C:cytoplasm"/>
    <property type="evidence" value="ECO:0007669"/>
    <property type="project" value="TreeGrafter"/>
</dbReference>
<dbReference type="GO" id="GO:0004020">
    <property type="term" value="F:adenylylsulfate kinase activity"/>
    <property type="evidence" value="ECO:0007669"/>
    <property type="project" value="UniProtKB-UniRule"/>
</dbReference>
<dbReference type="GO" id="GO:0005524">
    <property type="term" value="F:ATP binding"/>
    <property type="evidence" value="ECO:0007669"/>
    <property type="project" value="UniProtKB-UniRule"/>
</dbReference>
<dbReference type="GO" id="GO:0004781">
    <property type="term" value="F:sulfate adenylyltransferase (ATP) activity"/>
    <property type="evidence" value="ECO:0007669"/>
    <property type="project" value="TreeGrafter"/>
</dbReference>
<dbReference type="GO" id="GO:0070814">
    <property type="term" value="P:hydrogen sulfide biosynthetic process"/>
    <property type="evidence" value="ECO:0007669"/>
    <property type="project" value="UniProtKB-UniRule"/>
</dbReference>
<dbReference type="GO" id="GO:0010134">
    <property type="term" value="P:sulfate assimilation via adenylyl sulfate reduction"/>
    <property type="evidence" value="ECO:0007669"/>
    <property type="project" value="TreeGrafter"/>
</dbReference>
<dbReference type="GO" id="GO:0019379">
    <property type="term" value="P:sulfate assimilation, phosphoadenylyl sulfate reduction by phosphoadenylyl-sulfate reductase (thioredoxin)"/>
    <property type="evidence" value="ECO:0007669"/>
    <property type="project" value="TreeGrafter"/>
</dbReference>
<dbReference type="CDD" id="cd02027">
    <property type="entry name" value="APSK"/>
    <property type="match status" value="1"/>
</dbReference>
<dbReference type="FunFam" id="3.40.50.300:FF:000802">
    <property type="entry name" value="Sulfate adenylyltransferase"/>
    <property type="match status" value="1"/>
</dbReference>
<dbReference type="Gene3D" id="3.40.50.300">
    <property type="entry name" value="P-loop containing nucleotide triphosphate hydrolases"/>
    <property type="match status" value="1"/>
</dbReference>
<dbReference type="HAMAP" id="MF_00065">
    <property type="entry name" value="Adenylyl_sulf_kinase"/>
    <property type="match status" value="1"/>
</dbReference>
<dbReference type="InterPro" id="IPR002891">
    <property type="entry name" value="APS_kinase"/>
</dbReference>
<dbReference type="InterPro" id="IPR027417">
    <property type="entry name" value="P-loop_NTPase"/>
</dbReference>
<dbReference type="InterPro" id="IPR050512">
    <property type="entry name" value="Sulf_AdTrans/APS_kinase"/>
</dbReference>
<dbReference type="NCBIfam" id="TIGR00455">
    <property type="entry name" value="apsK"/>
    <property type="match status" value="1"/>
</dbReference>
<dbReference type="NCBIfam" id="NF002059">
    <property type="entry name" value="PRK00889.1"/>
    <property type="match status" value="1"/>
</dbReference>
<dbReference type="NCBIfam" id="NF003013">
    <property type="entry name" value="PRK03846.1"/>
    <property type="match status" value="1"/>
</dbReference>
<dbReference type="PANTHER" id="PTHR42700">
    <property type="entry name" value="SULFATE ADENYLYLTRANSFERASE"/>
    <property type="match status" value="1"/>
</dbReference>
<dbReference type="PANTHER" id="PTHR42700:SF1">
    <property type="entry name" value="SULFATE ADENYLYLTRANSFERASE"/>
    <property type="match status" value="1"/>
</dbReference>
<dbReference type="Pfam" id="PF01583">
    <property type="entry name" value="APS_kinase"/>
    <property type="match status" value="1"/>
</dbReference>
<dbReference type="SUPFAM" id="SSF52540">
    <property type="entry name" value="P-loop containing nucleoside triphosphate hydrolases"/>
    <property type="match status" value="1"/>
</dbReference>
<gene>
    <name evidence="1" type="primary">cysC</name>
    <name type="ordered locus">Hore_22650</name>
</gene>
<keyword id="KW-0067">ATP-binding</keyword>
<keyword id="KW-0418">Kinase</keyword>
<keyword id="KW-0547">Nucleotide-binding</keyword>
<keyword id="KW-0597">Phosphoprotein</keyword>
<keyword id="KW-1185">Reference proteome</keyword>
<keyword id="KW-0808">Transferase</keyword>
<proteinExistence type="inferred from homology"/>
<evidence type="ECO:0000255" key="1">
    <source>
        <dbReference type="HAMAP-Rule" id="MF_00065"/>
    </source>
</evidence>
<organism>
    <name type="scientific">Halothermothrix orenii (strain H 168 / OCM 544 / DSM 9562)</name>
    <dbReference type="NCBI Taxonomy" id="373903"/>
    <lineage>
        <taxon>Bacteria</taxon>
        <taxon>Bacillati</taxon>
        <taxon>Bacillota</taxon>
        <taxon>Clostridia</taxon>
        <taxon>Halanaerobiales</taxon>
        <taxon>Halothermotrichaceae</taxon>
        <taxon>Halothermothrix</taxon>
    </lineage>
</organism>
<feature type="chain" id="PRO_1000117955" description="Adenylyl-sulfate kinase">
    <location>
        <begin position="1"/>
        <end position="185"/>
    </location>
</feature>
<feature type="active site" description="Phosphoserine intermediate" evidence="1">
    <location>
        <position position="87"/>
    </location>
</feature>
<feature type="binding site" evidence="1">
    <location>
        <begin position="13"/>
        <end position="20"/>
    </location>
    <ligand>
        <name>ATP</name>
        <dbReference type="ChEBI" id="CHEBI:30616"/>
    </ligand>
</feature>
<comment type="function">
    <text evidence="1">Catalyzes the synthesis of activated sulfate.</text>
</comment>
<comment type="catalytic activity">
    <reaction evidence="1">
        <text>adenosine 5'-phosphosulfate + ATP = 3'-phosphoadenylyl sulfate + ADP + H(+)</text>
        <dbReference type="Rhea" id="RHEA:24152"/>
        <dbReference type="ChEBI" id="CHEBI:15378"/>
        <dbReference type="ChEBI" id="CHEBI:30616"/>
        <dbReference type="ChEBI" id="CHEBI:58243"/>
        <dbReference type="ChEBI" id="CHEBI:58339"/>
        <dbReference type="ChEBI" id="CHEBI:456216"/>
        <dbReference type="EC" id="2.7.1.25"/>
    </reaction>
</comment>
<comment type="pathway">
    <text evidence="1">Sulfur metabolism; hydrogen sulfide biosynthesis; sulfite from sulfate: step 2/3.</text>
</comment>
<comment type="similarity">
    <text evidence="1">Belongs to the APS kinase family.</text>
</comment>
<protein>
    <recommendedName>
        <fullName evidence="1">Adenylyl-sulfate kinase</fullName>
        <ecNumber evidence="1">2.7.1.25</ecNumber>
    </recommendedName>
    <alternativeName>
        <fullName evidence="1">APS kinase</fullName>
    </alternativeName>
    <alternativeName>
        <fullName evidence="1">ATP adenosine-5'-phosphosulfate 3'-phosphotransferase</fullName>
    </alternativeName>
    <alternativeName>
        <fullName evidence="1">Adenosine-5'-phosphosulfate kinase</fullName>
    </alternativeName>
</protein>
<sequence>MRNQKGVTVWFTGLSGAGKTTVAREVERQLKEKGYYVQRLDGDIVRQHLTRDLGFTKEDRDENIRRNSFVAKLLTQNDIITLCSFISPYRKARQTAREIIGEFIEVYVNAPLEVCEDRDVKGLYAKARAGEIDNFTGISDPYEPPQNPDLELRTDKETVEESASKVIEYLEEKGYINLPEDVLAG</sequence>
<name>CYSC_HALOH</name>
<accession>B8D0S4</accession>
<reference key="1">
    <citation type="journal article" date="2009" name="PLoS ONE">
        <title>Genome analysis of the anaerobic thermohalophilic bacterium Halothermothrix orenii.</title>
        <authorList>
            <person name="Mavromatis K."/>
            <person name="Ivanova N."/>
            <person name="Anderson I."/>
            <person name="Lykidis A."/>
            <person name="Hooper S.D."/>
            <person name="Sun H."/>
            <person name="Kunin V."/>
            <person name="Lapidus A."/>
            <person name="Hugenholtz P."/>
            <person name="Patel B."/>
            <person name="Kyrpides N.C."/>
        </authorList>
    </citation>
    <scope>NUCLEOTIDE SEQUENCE [LARGE SCALE GENOMIC DNA]</scope>
    <source>
        <strain>H 168 / OCM 544 / DSM 9562</strain>
    </source>
</reference>